<dbReference type="EMBL" id="CP001191">
    <property type="protein sequence ID" value="ACI53811.1"/>
    <property type="molecule type" value="Genomic_DNA"/>
</dbReference>
<dbReference type="RefSeq" id="WP_012556745.1">
    <property type="nucleotide sequence ID" value="NC_011369.1"/>
</dbReference>
<dbReference type="SMR" id="B5ZS18"/>
<dbReference type="STRING" id="395492.Rleg2_0514"/>
<dbReference type="KEGG" id="rlt:Rleg2_0514"/>
<dbReference type="eggNOG" id="COG0711">
    <property type="taxonomic scope" value="Bacteria"/>
</dbReference>
<dbReference type="HOGENOM" id="CLU_079215_1_2_5"/>
<dbReference type="Proteomes" id="UP000008330">
    <property type="component" value="Chromosome"/>
</dbReference>
<dbReference type="GO" id="GO:0005886">
    <property type="term" value="C:plasma membrane"/>
    <property type="evidence" value="ECO:0007669"/>
    <property type="project" value="UniProtKB-SubCell"/>
</dbReference>
<dbReference type="GO" id="GO:0045259">
    <property type="term" value="C:proton-transporting ATP synthase complex"/>
    <property type="evidence" value="ECO:0007669"/>
    <property type="project" value="UniProtKB-KW"/>
</dbReference>
<dbReference type="GO" id="GO:0046933">
    <property type="term" value="F:proton-transporting ATP synthase activity, rotational mechanism"/>
    <property type="evidence" value="ECO:0007669"/>
    <property type="project" value="UniProtKB-UniRule"/>
</dbReference>
<dbReference type="CDD" id="cd06503">
    <property type="entry name" value="ATP-synt_Fo_b"/>
    <property type="match status" value="1"/>
</dbReference>
<dbReference type="HAMAP" id="MF_01398">
    <property type="entry name" value="ATP_synth_b_bprime"/>
    <property type="match status" value="1"/>
</dbReference>
<dbReference type="InterPro" id="IPR002146">
    <property type="entry name" value="ATP_synth_b/b'su_bac/chlpt"/>
</dbReference>
<dbReference type="NCBIfam" id="NF006612">
    <property type="entry name" value="PRK09174.1"/>
    <property type="match status" value="1"/>
</dbReference>
<dbReference type="Pfam" id="PF00430">
    <property type="entry name" value="ATP-synt_B"/>
    <property type="match status" value="1"/>
</dbReference>
<keyword id="KW-0066">ATP synthesis</keyword>
<keyword id="KW-0997">Cell inner membrane</keyword>
<keyword id="KW-1003">Cell membrane</keyword>
<keyword id="KW-0138">CF(0)</keyword>
<keyword id="KW-0375">Hydrogen ion transport</keyword>
<keyword id="KW-0406">Ion transport</keyword>
<keyword id="KW-0472">Membrane</keyword>
<keyword id="KW-1185">Reference proteome</keyword>
<keyword id="KW-0812">Transmembrane</keyword>
<keyword id="KW-1133">Transmembrane helix</keyword>
<keyword id="KW-0813">Transport</keyword>
<organism>
    <name type="scientific">Rhizobium leguminosarum bv. trifolii (strain WSM2304)</name>
    <dbReference type="NCBI Taxonomy" id="395492"/>
    <lineage>
        <taxon>Bacteria</taxon>
        <taxon>Pseudomonadati</taxon>
        <taxon>Pseudomonadota</taxon>
        <taxon>Alphaproteobacteria</taxon>
        <taxon>Hyphomicrobiales</taxon>
        <taxon>Rhizobiaceae</taxon>
        <taxon>Rhizobium/Agrobacterium group</taxon>
        <taxon>Rhizobium</taxon>
    </lineage>
</organism>
<feature type="chain" id="PRO_0000369033" description="ATP synthase subunit b 2">
    <location>
        <begin position="1"/>
        <end position="207"/>
    </location>
</feature>
<feature type="transmembrane region" description="Helical" evidence="2">
    <location>
        <begin position="53"/>
        <end position="72"/>
    </location>
</feature>
<accession>B5ZS18</accession>
<reference key="1">
    <citation type="journal article" date="2010" name="Stand. Genomic Sci.">
        <title>Complete genome sequence of Rhizobium leguminosarum bv trifolii strain WSM2304, an effective microsymbiont of the South American clover Trifolium polymorphum.</title>
        <authorList>
            <person name="Reeve W."/>
            <person name="O'Hara G."/>
            <person name="Chain P."/>
            <person name="Ardley J."/>
            <person name="Brau L."/>
            <person name="Nandesena K."/>
            <person name="Tiwari R."/>
            <person name="Malfatti S."/>
            <person name="Kiss H."/>
            <person name="Lapidus A."/>
            <person name="Copeland A."/>
            <person name="Nolan M."/>
            <person name="Land M."/>
            <person name="Ivanova N."/>
            <person name="Mavromatis K."/>
            <person name="Markowitz V."/>
            <person name="Kyrpides N."/>
            <person name="Melino V."/>
            <person name="Denton M."/>
            <person name="Yates R."/>
            <person name="Howieson J."/>
        </authorList>
    </citation>
    <scope>NUCLEOTIDE SEQUENCE [LARGE SCALE GENOMIC DNA]</scope>
    <source>
        <strain>WSM2304</strain>
    </source>
</reference>
<proteinExistence type="inferred from homology"/>
<comment type="function">
    <text evidence="1">F(1)F(0) ATP synthase produces ATP from ADP in the presence of a proton or sodium gradient. F-type ATPases consist of two structural domains, F(1) containing the extramembraneous catalytic core and F(0) containing the membrane proton channel, linked together by a central stalk and a peripheral stalk. During catalysis, ATP synthesis in the catalytic domain of F(1) is coupled via a rotary mechanism of the central stalk subunits to proton translocation (By similarity).</text>
</comment>
<comment type="function">
    <text evidence="1">Component of the F(0) channel, it forms part of the peripheral stalk, linking F(1) to F(0). The b'-subunit is a diverged and duplicated form of b found in plants and photosynthetic bacteria (By similarity).</text>
</comment>
<comment type="subunit">
    <text evidence="1">F-type ATPases have 2 components, F(1) - the catalytic core - and F(0) - the membrane proton channel. F(1) has five subunits: alpha(3), beta(3), gamma(1), delta(1), epsilon(1). F(0) has three main subunits: a(1), b(2) and c(10-14). The alpha and beta chains form an alternating ring which encloses part of the gamma chain. F(1) is attached to F(0) by a central stalk formed by the gamma and epsilon chains, while a peripheral stalk is formed by the delta and b chains (By similarity).</text>
</comment>
<comment type="subcellular location">
    <subcellularLocation>
        <location evidence="1">Cell inner membrane</location>
        <topology evidence="1">Single-pass membrane protein</topology>
    </subcellularLocation>
</comment>
<comment type="similarity">
    <text evidence="3">Belongs to the ATPase B chain family.</text>
</comment>
<sequence length="207" mass="21531">MFFVTPAYAEEAPAAATGTDAHAAPAAGEVHTETGVAEGEHARGPFPPFDSTTYASQLLWLVITFSVFYLLMQKVIAPRIGAILDQRHTRLSQDLEEAGRLKAEADAAVQTYEGELAAARAKSNAIGAAARDAAKLKAEEDRRAVEASLSEKIKAAEVRIADIKAKAFADVGTIAEETAAAVVEQLIGGTAAQADVAAAVAAAKKEA</sequence>
<gene>
    <name type="primary">atpF2</name>
    <name type="synonym">atpG</name>
    <name type="ordered locus">Rleg2_0514</name>
</gene>
<protein>
    <recommendedName>
        <fullName>ATP synthase subunit b 2</fullName>
    </recommendedName>
    <alternativeName>
        <fullName>ATP synthase F(0) sector subunit b 2</fullName>
    </alternativeName>
    <alternativeName>
        <fullName>ATPase subunit I 2</fullName>
    </alternativeName>
    <alternativeName>
        <fullName>F-type ATPase subunit b 2</fullName>
        <shortName>F-ATPase subunit b 2</shortName>
    </alternativeName>
</protein>
<evidence type="ECO:0000250" key="1"/>
<evidence type="ECO:0000255" key="2"/>
<evidence type="ECO:0000305" key="3"/>
<name>ATPF2_RHILW</name>